<name>TGT_MOOTA</name>
<organism>
    <name type="scientific">Moorella thermoacetica (strain ATCC 39073 / JCM 9320)</name>
    <dbReference type="NCBI Taxonomy" id="264732"/>
    <lineage>
        <taxon>Bacteria</taxon>
        <taxon>Bacillati</taxon>
        <taxon>Bacillota</taxon>
        <taxon>Clostridia</taxon>
        <taxon>Moorellales</taxon>
        <taxon>Moorellaceae</taxon>
        <taxon>Moorella</taxon>
    </lineage>
</organism>
<gene>
    <name evidence="1" type="primary">tgt</name>
    <name type="ordered locus">Moth_1694</name>
</gene>
<reference key="1">
    <citation type="journal article" date="2008" name="Environ. Microbiol.">
        <title>The complete genome sequence of Moorella thermoacetica (f. Clostridium thermoaceticum).</title>
        <authorList>
            <person name="Pierce E."/>
            <person name="Xie G."/>
            <person name="Barabote R.D."/>
            <person name="Saunders E."/>
            <person name="Han C.S."/>
            <person name="Detter J.C."/>
            <person name="Richardson P."/>
            <person name="Brettin T.S."/>
            <person name="Das A."/>
            <person name="Ljungdahl L.G."/>
            <person name="Ragsdale S.W."/>
        </authorList>
    </citation>
    <scope>NUCLEOTIDE SEQUENCE [LARGE SCALE GENOMIC DNA]</scope>
    <source>
        <strain>ATCC 39073 / JCM 9320</strain>
    </source>
</reference>
<dbReference type="EC" id="2.4.2.29" evidence="1"/>
<dbReference type="EMBL" id="CP000232">
    <property type="protein sequence ID" value="ABC19996.1"/>
    <property type="molecule type" value="Genomic_DNA"/>
</dbReference>
<dbReference type="RefSeq" id="YP_430539.1">
    <property type="nucleotide sequence ID" value="NC_007644.1"/>
</dbReference>
<dbReference type="SMR" id="Q2RHU3"/>
<dbReference type="STRING" id="264732.Moth_1694"/>
<dbReference type="EnsemblBacteria" id="ABC19996">
    <property type="protein sequence ID" value="ABC19996"/>
    <property type="gene ID" value="Moth_1694"/>
</dbReference>
<dbReference type="KEGG" id="mta:Moth_1694"/>
<dbReference type="PATRIC" id="fig|264732.11.peg.1835"/>
<dbReference type="eggNOG" id="COG0343">
    <property type="taxonomic scope" value="Bacteria"/>
</dbReference>
<dbReference type="HOGENOM" id="CLU_022060_0_1_9"/>
<dbReference type="OrthoDB" id="9805417at2"/>
<dbReference type="UniPathway" id="UPA00392"/>
<dbReference type="GO" id="GO:0005829">
    <property type="term" value="C:cytosol"/>
    <property type="evidence" value="ECO:0007669"/>
    <property type="project" value="TreeGrafter"/>
</dbReference>
<dbReference type="GO" id="GO:0046872">
    <property type="term" value="F:metal ion binding"/>
    <property type="evidence" value="ECO:0007669"/>
    <property type="project" value="UniProtKB-KW"/>
</dbReference>
<dbReference type="GO" id="GO:0008479">
    <property type="term" value="F:tRNA-guanosine(34) queuine transglycosylase activity"/>
    <property type="evidence" value="ECO:0007669"/>
    <property type="project" value="UniProtKB-UniRule"/>
</dbReference>
<dbReference type="GO" id="GO:0008616">
    <property type="term" value="P:queuosine biosynthetic process"/>
    <property type="evidence" value="ECO:0007669"/>
    <property type="project" value="UniProtKB-UniRule"/>
</dbReference>
<dbReference type="GO" id="GO:0002099">
    <property type="term" value="P:tRNA wobble guanine modification"/>
    <property type="evidence" value="ECO:0007669"/>
    <property type="project" value="TreeGrafter"/>
</dbReference>
<dbReference type="GO" id="GO:0101030">
    <property type="term" value="P:tRNA-guanine transglycosylation"/>
    <property type="evidence" value="ECO:0007669"/>
    <property type="project" value="InterPro"/>
</dbReference>
<dbReference type="FunFam" id="3.20.20.105:FF:000001">
    <property type="entry name" value="Queuine tRNA-ribosyltransferase"/>
    <property type="match status" value="1"/>
</dbReference>
<dbReference type="Gene3D" id="3.20.20.105">
    <property type="entry name" value="Queuine tRNA-ribosyltransferase-like"/>
    <property type="match status" value="1"/>
</dbReference>
<dbReference type="HAMAP" id="MF_00168">
    <property type="entry name" value="Q_tRNA_Tgt"/>
    <property type="match status" value="1"/>
</dbReference>
<dbReference type="InterPro" id="IPR050076">
    <property type="entry name" value="ArchSynthase1/Queuine_TRR"/>
</dbReference>
<dbReference type="InterPro" id="IPR004803">
    <property type="entry name" value="TGT"/>
</dbReference>
<dbReference type="InterPro" id="IPR036511">
    <property type="entry name" value="TGT-like_sf"/>
</dbReference>
<dbReference type="InterPro" id="IPR002616">
    <property type="entry name" value="tRNA_ribo_trans-like"/>
</dbReference>
<dbReference type="NCBIfam" id="TIGR00430">
    <property type="entry name" value="Q_tRNA_tgt"/>
    <property type="match status" value="1"/>
</dbReference>
<dbReference type="NCBIfam" id="TIGR00449">
    <property type="entry name" value="tgt_general"/>
    <property type="match status" value="1"/>
</dbReference>
<dbReference type="PANTHER" id="PTHR46499">
    <property type="entry name" value="QUEUINE TRNA-RIBOSYLTRANSFERASE"/>
    <property type="match status" value="1"/>
</dbReference>
<dbReference type="PANTHER" id="PTHR46499:SF1">
    <property type="entry name" value="QUEUINE TRNA-RIBOSYLTRANSFERASE"/>
    <property type="match status" value="1"/>
</dbReference>
<dbReference type="Pfam" id="PF01702">
    <property type="entry name" value="TGT"/>
    <property type="match status" value="1"/>
</dbReference>
<dbReference type="SUPFAM" id="SSF51713">
    <property type="entry name" value="tRNA-guanine transglycosylase"/>
    <property type="match status" value="1"/>
</dbReference>
<sequence length="373" mass="41525">MPAVTFTVLKRDRSTGARLGRLTTPHGTIETPVFMPVGTQATVKTMTPEEVAGLGAEIILANTYHLYLRPGADIIREAGGLHRFMHWERPILTDSGGFQVFSLADLREISDEGVTFRSHLDGSIHFLGPAESMAVQEALGSDIAMAFDECVAYPASPEEVAAGVERTSRWAEACLRAHRREDQAVFGIIQGGTIPELRRRSAREITALDFPGYGIGGLSVGEPKELMYSILEELQGYLPENKPRYLMGVGSPDCLIEGVKRGVDMFDCVLPTRIARNGTVMTTYGKLVVRNAAYARDFRPLDPECDCYTCRNYTRAYIRHLLKAEEILGLRLTTIHNLHFLIKLMQRLRQAIAEGRLEEVAADFYERYNSGKI</sequence>
<keyword id="KW-0328">Glycosyltransferase</keyword>
<keyword id="KW-0479">Metal-binding</keyword>
<keyword id="KW-0671">Queuosine biosynthesis</keyword>
<keyword id="KW-0808">Transferase</keyword>
<keyword id="KW-0819">tRNA processing</keyword>
<keyword id="KW-0862">Zinc</keyword>
<evidence type="ECO:0000255" key="1">
    <source>
        <dbReference type="HAMAP-Rule" id="MF_00168"/>
    </source>
</evidence>
<accession>Q2RHU3</accession>
<protein>
    <recommendedName>
        <fullName evidence="1">Queuine tRNA-ribosyltransferase</fullName>
        <ecNumber evidence="1">2.4.2.29</ecNumber>
    </recommendedName>
    <alternativeName>
        <fullName evidence="1">Guanine insertion enzyme</fullName>
    </alternativeName>
    <alternativeName>
        <fullName evidence="1">tRNA-guanine transglycosylase</fullName>
    </alternativeName>
</protein>
<proteinExistence type="inferred from homology"/>
<comment type="function">
    <text evidence="1">Catalyzes the base-exchange of a guanine (G) residue with the queuine precursor 7-aminomethyl-7-deazaguanine (PreQ1) at position 34 (anticodon wobble position) in tRNAs with GU(N) anticodons (tRNA-Asp, -Asn, -His and -Tyr). Catalysis occurs through a double-displacement mechanism. The nucleophile active site attacks the C1' of nucleotide 34 to detach the guanine base from the RNA, forming a covalent enzyme-RNA intermediate. The proton acceptor active site deprotonates the incoming PreQ1, allowing a nucleophilic attack on the C1' of the ribose to form the product. After dissociation, two additional enzymatic reactions on the tRNA convert PreQ1 to queuine (Q), resulting in the hypermodified nucleoside queuosine (7-(((4,5-cis-dihydroxy-2-cyclopenten-1-yl)amino)methyl)-7-deazaguanosine).</text>
</comment>
<comment type="catalytic activity">
    <reaction evidence="1">
        <text>7-aminomethyl-7-carbaguanine + guanosine(34) in tRNA = 7-aminomethyl-7-carbaguanosine(34) in tRNA + guanine</text>
        <dbReference type="Rhea" id="RHEA:24104"/>
        <dbReference type="Rhea" id="RHEA-COMP:10341"/>
        <dbReference type="Rhea" id="RHEA-COMP:10342"/>
        <dbReference type="ChEBI" id="CHEBI:16235"/>
        <dbReference type="ChEBI" id="CHEBI:58703"/>
        <dbReference type="ChEBI" id="CHEBI:74269"/>
        <dbReference type="ChEBI" id="CHEBI:82833"/>
        <dbReference type="EC" id="2.4.2.29"/>
    </reaction>
</comment>
<comment type="cofactor">
    <cofactor evidence="1">
        <name>Zn(2+)</name>
        <dbReference type="ChEBI" id="CHEBI:29105"/>
    </cofactor>
    <text evidence="1">Binds 1 zinc ion per subunit.</text>
</comment>
<comment type="pathway">
    <text evidence="1">tRNA modification; tRNA-queuosine biosynthesis.</text>
</comment>
<comment type="subunit">
    <text evidence="1">Homodimer. Within each dimer, one monomer is responsible for RNA recognition and catalysis, while the other monomer binds to the replacement base PreQ1.</text>
</comment>
<comment type="similarity">
    <text evidence="1">Belongs to the queuine tRNA-ribosyltransferase family.</text>
</comment>
<feature type="chain" id="PRO_1000016816" description="Queuine tRNA-ribosyltransferase">
    <location>
        <begin position="1"/>
        <end position="373"/>
    </location>
</feature>
<feature type="region of interest" description="RNA binding" evidence="1">
    <location>
        <begin position="248"/>
        <end position="254"/>
    </location>
</feature>
<feature type="region of interest" description="RNA binding; important for wobble base 34 recognition" evidence="1">
    <location>
        <begin position="272"/>
        <end position="276"/>
    </location>
</feature>
<feature type="active site" description="Proton acceptor" evidence="1">
    <location>
        <position position="94"/>
    </location>
</feature>
<feature type="active site" description="Nucleophile" evidence="1">
    <location>
        <position position="267"/>
    </location>
</feature>
<feature type="binding site" evidence="1">
    <location>
        <begin position="94"/>
        <end position="98"/>
    </location>
    <ligand>
        <name>substrate</name>
    </ligand>
</feature>
<feature type="binding site" evidence="1">
    <location>
        <position position="148"/>
    </location>
    <ligand>
        <name>substrate</name>
    </ligand>
</feature>
<feature type="binding site" evidence="1">
    <location>
        <position position="190"/>
    </location>
    <ligand>
        <name>substrate</name>
    </ligand>
</feature>
<feature type="binding site" evidence="1">
    <location>
        <position position="217"/>
    </location>
    <ligand>
        <name>substrate</name>
    </ligand>
</feature>
<feature type="binding site" evidence="1">
    <location>
        <position position="305"/>
    </location>
    <ligand>
        <name>Zn(2+)</name>
        <dbReference type="ChEBI" id="CHEBI:29105"/>
    </ligand>
</feature>
<feature type="binding site" evidence="1">
    <location>
        <position position="307"/>
    </location>
    <ligand>
        <name>Zn(2+)</name>
        <dbReference type="ChEBI" id="CHEBI:29105"/>
    </ligand>
</feature>
<feature type="binding site" evidence="1">
    <location>
        <position position="310"/>
    </location>
    <ligand>
        <name>Zn(2+)</name>
        <dbReference type="ChEBI" id="CHEBI:29105"/>
    </ligand>
</feature>
<feature type="binding site" evidence="1">
    <location>
        <position position="336"/>
    </location>
    <ligand>
        <name>Zn(2+)</name>
        <dbReference type="ChEBI" id="CHEBI:29105"/>
    </ligand>
</feature>